<comment type="function">
    <text evidence="1">Involved in the third step of the chorismate pathway, which leads to the biosynthesis of aromatic amino acids. Catalyzes the cis-dehydration of 3-dehydroquinate (DHQ) and introduces the first double bond of the aromatic ring to yield 3-dehydroshikimate.</text>
</comment>
<comment type="catalytic activity">
    <reaction evidence="1">
        <text>3-dehydroquinate = 3-dehydroshikimate + H2O</text>
        <dbReference type="Rhea" id="RHEA:21096"/>
        <dbReference type="ChEBI" id="CHEBI:15377"/>
        <dbReference type="ChEBI" id="CHEBI:16630"/>
        <dbReference type="ChEBI" id="CHEBI:32364"/>
        <dbReference type="EC" id="4.2.1.10"/>
    </reaction>
</comment>
<comment type="pathway">
    <text evidence="1">Metabolic intermediate biosynthesis; chorismate biosynthesis; chorismate from D-erythrose 4-phosphate and phosphoenolpyruvate: step 3/7.</text>
</comment>
<comment type="subunit">
    <text evidence="1">Homodimer.</text>
</comment>
<comment type="similarity">
    <text evidence="1">Belongs to the type-I 3-dehydroquinase family.</text>
</comment>
<accession>Q48U89</accession>
<protein>
    <recommendedName>
        <fullName evidence="1">3-dehydroquinate dehydratase</fullName>
        <shortName evidence="1">3-dehydroquinase</shortName>
        <ecNumber evidence="1">4.2.1.10</ecNumber>
    </recommendedName>
    <alternativeName>
        <fullName evidence="1">Type I DHQase</fullName>
    </alternativeName>
    <alternativeName>
        <fullName evidence="1">Type I dehydroquinase</fullName>
        <shortName evidence="1">DHQ1</shortName>
    </alternativeName>
</protein>
<gene>
    <name evidence="1" type="primary">aroD</name>
    <name type="ordered locus">M28_Spy0603</name>
</gene>
<evidence type="ECO:0000255" key="1">
    <source>
        <dbReference type="HAMAP-Rule" id="MF_00214"/>
    </source>
</evidence>
<feature type="chain" id="PRO_1000043201" description="3-dehydroquinate dehydratase">
    <location>
        <begin position="1"/>
        <end position="228"/>
    </location>
</feature>
<feature type="active site" description="Proton donor/acceptor" evidence="1">
    <location>
        <position position="118"/>
    </location>
</feature>
<feature type="active site" description="Schiff-base intermediate with substrate" evidence="1">
    <location>
        <position position="143"/>
    </location>
</feature>
<feature type="binding site" evidence="1">
    <location>
        <begin position="30"/>
        <end position="32"/>
    </location>
    <ligand>
        <name>3-dehydroquinate</name>
        <dbReference type="ChEBI" id="CHEBI:32364"/>
    </ligand>
</feature>
<feature type="binding site" evidence="1">
    <location>
        <position position="62"/>
    </location>
    <ligand>
        <name>3-dehydroquinate</name>
        <dbReference type="ChEBI" id="CHEBI:32364"/>
    </ligand>
</feature>
<feature type="binding site" evidence="1">
    <location>
        <position position="186"/>
    </location>
    <ligand>
        <name>3-dehydroquinate</name>
        <dbReference type="ChEBI" id="CHEBI:32364"/>
    </ligand>
</feature>
<feature type="binding site" evidence="1">
    <location>
        <position position="205"/>
    </location>
    <ligand>
        <name>3-dehydroquinate</name>
        <dbReference type="ChEBI" id="CHEBI:32364"/>
    </ligand>
</feature>
<feature type="binding site" evidence="1">
    <location>
        <position position="209"/>
    </location>
    <ligand>
        <name>3-dehydroquinate</name>
        <dbReference type="ChEBI" id="CHEBI:32364"/>
    </ligand>
</feature>
<sequence length="228" mass="26101">MRIVAPVMPRHFDEAQAIDISKYEDVNLIEWRADFLPKDEIVAVAPAIFEKFAGKEIIFTLRTVQEGGNITLSSQEYVDIIKEINAIYNPDYIDFEYFTHKSVFQEMLDFPNLILSYHNFEETPENLMEAFSEMTKLAPRVVKIAVMPQSEQDVLDLMNYTRGFKTLNPEQEFATISMGKLGRLSRFAGDVIGSSWTYVSLDHVSGPGQVTLNDMKRIIEVLEMDISN</sequence>
<name>AROD_STRPM</name>
<keyword id="KW-0028">Amino-acid biosynthesis</keyword>
<keyword id="KW-0057">Aromatic amino acid biosynthesis</keyword>
<keyword id="KW-0456">Lyase</keyword>
<keyword id="KW-0704">Schiff base</keyword>
<organism>
    <name type="scientific">Streptococcus pyogenes serotype M28 (strain MGAS6180)</name>
    <dbReference type="NCBI Taxonomy" id="319701"/>
    <lineage>
        <taxon>Bacteria</taxon>
        <taxon>Bacillati</taxon>
        <taxon>Bacillota</taxon>
        <taxon>Bacilli</taxon>
        <taxon>Lactobacillales</taxon>
        <taxon>Streptococcaceae</taxon>
        <taxon>Streptococcus</taxon>
    </lineage>
</organism>
<reference key="1">
    <citation type="journal article" date="2005" name="J. Infect. Dis.">
        <title>Genome sequence of a serotype M28 strain of group A Streptococcus: potential new insights into puerperal sepsis and bacterial disease specificity.</title>
        <authorList>
            <person name="Green N.M."/>
            <person name="Zhang S."/>
            <person name="Porcella S.F."/>
            <person name="Nagiec M.J."/>
            <person name="Barbian K.D."/>
            <person name="Beres S.B."/>
            <person name="Lefebvre R.B."/>
            <person name="Musser J.M."/>
        </authorList>
    </citation>
    <scope>NUCLEOTIDE SEQUENCE [LARGE SCALE GENOMIC DNA]</scope>
    <source>
        <strain>MGAS6180</strain>
    </source>
</reference>
<dbReference type="EC" id="4.2.1.10" evidence="1"/>
<dbReference type="EMBL" id="CP000056">
    <property type="protein sequence ID" value="AAX71717.1"/>
    <property type="molecule type" value="Genomic_DNA"/>
</dbReference>
<dbReference type="RefSeq" id="WP_002985140.1">
    <property type="nucleotide sequence ID" value="NC_007296.2"/>
</dbReference>
<dbReference type="SMR" id="Q48U89"/>
<dbReference type="GeneID" id="69901072"/>
<dbReference type="KEGG" id="spb:M28_Spy0603"/>
<dbReference type="HOGENOM" id="CLU_064444_0_0_9"/>
<dbReference type="UniPathway" id="UPA00053">
    <property type="reaction ID" value="UER00086"/>
</dbReference>
<dbReference type="GO" id="GO:0003855">
    <property type="term" value="F:3-dehydroquinate dehydratase activity"/>
    <property type="evidence" value="ECO:0007669"/>
    <property type="project" value="UniProtKB-UniRule"/>
</dbReference>
<dbReference type="GO" id="GO:0046279">
    <property type="term" value="P:3,4-dihydroxybenzoate biosynthetic process"/>
    <property type="evidence" value="ECO:0007669"/>
    <property type="project" value="UniProtKB-ARBA"/>
</dbReference>
<dbReference type="GO" id="GO:0008652">
    <property type="term" value="P:amino acid biosynthetic process"/>
    <property type="evidence" value="ECO:0007669"/>
    <property type="project" value="UniProtKB-KW"/>
</dbReference>
<dbReference type="GO" id="GO:0009073">
    <property type="term" value="P:aromatic amino acid family biosynthetic process"/>
    <property type="evidence" value="ECO:0007669"/>
    <property type="project" value="UniProtKB-KW"/>
</dbReference>
<dbReference type="GO" id="GO:0009423">
    <property type="term" value="P:chorismate biosynthetic process"/>
    <property type="evidence" value="ECO:0007669"/>
    <property type="project" value="UniProtKB-UniRule"/>
</dbReference>
<dbReference type="CDD" id="cd00502">
    <property type="entry name" value="DHQase_I"/>
    <property type="match status" value="1"/>
</dbReference>
<dbReference type="Gene3D" id="3.20.20.70">
    <property type="entry name" value="Aldolase class I"/>
    <property type="match status" value="1"/>
</dbReference>
<dbReference type="HAMAP" id="MF_00214">
    <property type="entry name" value="AroD"/>
    <property type="match status" value="1"/>
</dbReference>
<dbReference type="InterPro" id="IPR013785">
    <property type="entry name" value="Aldolase_TIM"/>
</dbReference>
<dbReference type="InterPro" id="IPR001381">
    <property type="entry name" value="DHquinase_I"/>
</dbReference>
<dbReference type="InterPro" id="IPR050146">
    <property type="entry name" value="Type-I_3-dehydroquinase"/>
</dbReference>
<dbReference type="NCBIfam" id="TIGR01093">
    <property type="entry name" value="aroD"/>
    <property type="match status" value="1"/>
</dbReference>
<dbReference type="PANTHER" id="PTHR43699">
    <property type="entry name" value="3-DEHYDROQUINATE DEHYDRATASE"/>
    <property type="match status" value="1"/>
</dbReference>
<dbReference type="PANTHER" id="PTHR43699:SF1">
    <property type="entry name" value="3-DEHYDROQUINATE DEHYDRATASE"/>
    <property type="match status" value="1"/>
</dbReference>
<dbReference type="Pfam" id="PF01487">
    <property type="entry name" value="DHquinase_I"/>
    <property type="match status" value="1"/>
</dbReference>
<dbReference type="SUPFAM" id="SSF51569">
    <property type="entry name" value="Aldolase"/>
    <property type="match status" value="1"/>
</dbReference>
<proteinExistence type="inferred from homology"/>